<name>YP016_YEAST</name>
<proteinExistence type="uncertain"/>
<gene>
    <name type="ordered locus">YPR016W-A</name>
</gene>
<reference key="1">
    <citation type="journal article" date="1997" name="Nature">
        <title>The nucleotide sequence of Saccharomyces cerevisiae chromosome XVI.</title>
        <authorList>
            <person name="Bussey H."/>
            <person name="Storms R.K."/>
            <person name="Ahmed A."/>
            <person name="Albermann K."/>
            <person name="Allen E."/>
            <person name="Ansorge W."/>
            <person name="Araujo R."/>
            <person name="Aparicio A."/>
            <person name="Barrell B.G."/>
            <person name="Badcock K."/>
            <person name="Benes V."/>
            <person name="Botstein D."/>
            <person name="Bowman S."/>
            <person name="Brueckner M."/>
            <person name="Carpenter J."/>
            <person name="Cherry J.M."/>
            <person name="Chung E."/>
            <person name="Churcher C.M."/>
            <person name="Coster F."/>
            <person name="Davis K."/>
            <person name="Davis R.W."/>
            <person name="Dietrich F.S."/>
            <person name="Delius H."/>
            <person name="DiPaolo T."/>
            <person name="Dubois E."/>
            <person name="Duesterhoeft A."/>
            <person name="Duncan M."/>
            <person name="Floeth M."/>
            <person name="Fortin N."/>
            <person name="Friesen J.D."/>
            <person name="Fritz C."/>
            <person name="Goffeau A."/>
            <person name="Hall J."/>
            <person name="Hebling U."/>
            <person name="Heumann K."/>
            <person name="Hilbert H."/>
            <person name="Hillier L.W."/>
            <person name="Hunicke-Smith S."/>
            <person name="Hyman R.W."/>
            <person name="Johnston M."/>
            <person name="Kalman S."/>
            <person name="Kleine K."/>
            <person name="Komp C."/>
            <person name="Kurdi O."/>
            <person name="Lashkari D."/>
            <person name="Lew H."/>
            <person name="Lin A."/>
            <person name="Lin D."/>
            <person name="Louis E.J."/>
            <person name="Marathe R."/>
            <person name="Messenguy F."/>
            <person name="Mewes H.-W."/>
            <person name="Mirtipati S."/>
            <person name="Moestl D."/>
            <person name="Mueller-Auer S."/>
            <person name="Namath A."/>
            <person name="Nentwich U."/>
            <person name="Oefner P."/>
            <person name="Pearson D."/>
            <person name="Petel F.X."/>
            <person name="Pohl T.M."/>
            <person name="Purnelle B."/>
            <person name="Rajandream M.A."/>
            <person name="Rechmann S."/>
            <person name="Rieger M."/>
            <person name="Riles L."/>
            <person name="Roberts D."/>
            <person name="Schaefer M."/>
            <person name="Scharfe M."/>
            <person name="Scherens B."/>
            <person name="Schramm S."/>
            <person name="Schroeder M."/>
            <person name="Sdicu A.-M."/>
            <person name="Tettelin H."/>
            <person name="Urrestarazu L.A."/>
            <person name="Ushinsky S."/>
            <person name="Vierendeels F."/>
            <person name="Vissers S."/>
            <person name="Voss H."/>
            <person name="Walsh S.V."/>
            <person name="Wambutt R."/>
            <person name="Wang Y."/>
            <person name="Wedler E."/>
            <person name="Wedler H."/>
            <person name="Winnett E."/>
            <person name="Zhong W.-W."/>
            <person name="Zollner A."/>
            <person name="Vo D.H."/>
            <person name="Hani J."/>
        </authorList>
    </citation>
    <scope>NUCLEOTIDE SEQUENCE [LARGE SCALE GENOMIC DNA]</scope>
    <source>
        <strain>ATCC 204508 / S288c</strain>
    </source>
</reference>
<reference key="2">
    <citation type="journal article" date="2014" name="G3 (Bethesda)">
        <title>The reference genome sequence of Saccharomyces cerevisiae: Then and now.</title>
        <authorList>
            <person name="Engel S.R."/>
            <person name="Dietrich F.S."/>
            <person name="Fisk D.G."/>
            <person name="Binkley G."/>
            <person name="Balakrishnan R."/>
            <person name="Costanzo M.C."/>
            <person name="Dwight S.S."/>
            <person name="Hitz B.C."/>
            <person name="Karra K."/>
            <person name="Nash R.S."/>
            <person name="Weng S."/>
            <person name="Wong E.D."/>
            <person name="Lloyd P."/>
            <person name="Skrzypek M.S."/>
            <person name="Miyasato S.R."/>
            <person name="Simison M."/>
            <person name="Cherry J.M."/>
        </authorList>
    </citation>
    <scope>GENOME REANNOTATION</scope>
    <source>
        <strain>ATCC 204508 / S288c</strain>
    </source>
</reference>
<reference key="3">
    <citation type="journal article" date="2000" name="FEBS Lett.">
        <title>Genomic exploration of the hemiascomycetous yeasts: 4. The genome of Saccharomyces cerevisiae revisited.</title>
        <authorList>
            <person name="Blandin G."/>
            <person name="Durrens P."/>
            <person name="Tekaia F."/>
            <person name="Aigle M."/>
            <person name="Bolotin-Fukuhara M."/>
            <person name="Bon E."/>
            <person name="Casaregola S."/>
            <person name="de Montigny J."/>
            <person name="Gaillardin C."/>
            <person name="Lepingle A."/>
            <person name="Llorente B."/>
            <person name="Malpertuy A."/>
            <person name="Neuveglise C."/>
            <person name="Ozier-Kalogeropoulos O."/>
            <person name="Perrin A."/>
            <person name="Potier S."/>
            <person name="Souciet J.-L."/>
            <person name="Talla E."/>
            <person name="Toffano-Nioche C."/>
            <person name="Wesolowski-Louvel M."/>
            <person name="Marck C."/>
            <person name="Dujon B."/>
        </authorList>
    </citation>
    <scope>GENOME REANNOTATION</scope>
</reference>
<evidence type="ECO:0000305" key="1">
    <source>
    </source>
</evidence>
<comment type="caution">
    <text evidence="1">Product of a dubious gene prediction unlikely to encode a functional protein. Because of that it is not part of the S.cerevisiae S288c complete/reference proteome set.</text>
</comment>
<dbReference type="EMBL" id="U31900">
    <property type="status" value="NOT_ANNOTATED_CDS"/>
    <property type="molecule type" value="Genomic_DNA"/>
</dbReference>
<dbReference type="EMBL" id="Z49919">
    <property type="status" value="NOT_ANNOTATED_CDS"/>
    <property type="molecule type" value="Genomic_DNA"/>
</dbReference>
<dbReference type="EMBL" id="Z71255">
    <property type="status" value="NOT_ANNOTATED_CDS"/>
    <property type="molecule type" value="Genomic_DNA"/>
</dbReference>
<dbReference type="PaxDb" id="4932-YPR016W-A"/>
<dbReference type="TopDownProteomics" id="P0C5R5"/>
<dbReference type="EnsemblFungi" id="YPR016W-A_mRNA">
    <property type="protein sequence ID" value="YPR016W-A"/>
    <property type="gene ID" value="YPR016W-A"/>
</dbReference>
<dbReference type="AGR" id="SGD:S000007630"/>
<dbReference type="SGD" id="S000007630">
    <property type="gene designation" value="YPR016W-A"/>
</dbReference>
<dbReference type="HOGENOM" id="CLU_2499142_0_0_1"/>
<feature type="chain" id="PRO_0000309063" description="Putative uncharacterized protein YPR016W-A">
    <location>
        <begin position="1"/>
        <end position="86"/>
    </location>
</feature>
<accession>P0C5R5</accession>
<organism>
    <name type="scientific">Saccharomyces cerevisiae (strain ATCC 204508 / S288c)</name>
    <name type="common">Baker's yeast</name>
    <dbReference type="NCBI Taxonomy" id="559292"/>
    <lineage>
        <taxon>Eukaryota</taxon>
        <taxon>Fungi</taxon>
        <taxon>Dikarya</taxon>
        <taxon>Ascomycota</taxon>
        <taxon>Saccharomycotina</taxon>
        <taxon>Saccharomycetes</taxon>
        <taxon>Saccharomycetales</taxon>
        <taxon>Saccharomycetaceae</taxon>
        <taxon>Saccharomyces</taxon>
    </lineage>
</organism>
<protein>
    <recommendedName>
        <fullName>Putative uncharacterized protein YPR016W-A</fullName>
    </recommendedName>
</protein>
<sequence>MLLFQILCRIASCNYTIRPTRDEASFNYAILNIALHTVKEKICTKEYGFKSLINKNFPKIFVWPSEKTGNAHPLGFRPECLYYYIK</sequence>